<accession>Q0HPE6</accession>
<sequence length="541" mass="60573">MESQRNILLIGLLFVSFLLWQQWQADKAPKPVATESSVVANATTNHSADVPEADTGVPAAMTATQNLITVKTDQLDVQINPVGGDIVFAALVSHKLEQGKDQPFVLLEQTKDFTYIAQSGLIGRDGIDSSAKGRAAFAASKTEFTLADGQDTLEVPLTYVADNGVTYTKVFVFHRGKFNVDIDYKINNTSAAPLQVQMYGQIKQTIKPSESSMMMPTYRGAAFSTQDVRYEKYKFEDMSKSNLNQPTLGGWAAMLQHYFVSAWIPPATDSNTIFSSVSAGGLANIGFRGAVYDIAPGATQEISSQFYVGPKDQKALSALSDTLNLVVDYGFLWWLAVPIHWLLMFYQSFVGNWGVAIILITLTVRGLLFPLTKAQYTSMAKMRNLQPKLQDLKERFGDDRQKMGQAMMELYKKEKVNPMGGCLPILLQMPIFIALYWVLLESFELRHAPFMLWIHDLSVQDPYYILPLLMGVSMFVMQKMQPIAPTMDPMQVKMMQWMPVIFTVFFLWFPSGLVLYWLVGNIVAIIQQKIIYAGLEKKGLK</sequence>
<gene>
    <name evidence="1" type="primary">yidC</name>
    <name type="ordered locus">Shewmr7_4032</name>
</gene>
<protein>
    <recommendedName>
        <fullName evidence="1">Membrane protein insertase YidC</fullName>
    </recommendedName>
    <alternativeName>
        <fullName evidence="1">Foldase YidC</fullName>
    </alternativeName>
    <alternativeName>
        <fullName evidence="1">Membrane integrase YidC</fullName>
    </alternativeName>
    <alternativeName>
        <fullName evidence="1">Membrane protein YidC</fullName>
    </alternativeName>
</protein>
<dbReference type="EMBL" id="CP000444">
    <property type="protein sequence ID" value="ABI45009.1"/>
    <property type="molecule type" value="Genomic_DNA"/>
</dbReference>
<dbReference type="SMR" id="Q0HPE6"/>
<dbReference type="KEGG" id="shm:Shewmr7_4032"/>
<dbReference type="HOGENOM" id="CLU_016535_3_0_6"/>
<dbReference type="GO" id="GO:0005886">
    <property type="term" value="C:plasma membrane"/>
    <property type="evidence" value="ECO:0007669"/>
    <property type="project" value="UniProtKB-SubCell"/>
</dbReference>
<dbReference type="GO" id="GO:0032977">
    <property type="term" value="F:membrane insertase activity"/>
    <property type="evidence" value="ECO:0007669"/>
    <property type="project" value="InterPro"/>
</dbReference>
<dbReference type="GO" id="GO:0051205">
    <property type="term" value="P:protein insertion into membrane"/>
    <property type="evidence" value="ECO:0007669"/>
    <property type="project" value="TreeGrafter"/>
</dbReference>
<dbReference type="GO" id="GO:0015031">
    <property type="term" value="P:protein transport"/>
    <property type="evidence" value="ECO:0007669"/>
    <property type="project" value="UniProtKB-KW"/>
</dbReference>
<dbReference type="CDD" id="cd20070">
    <property type="entry name" value="5TM_YidC_Alb3"/>
    <property type="match status" value="1"/>
</dbReference>
<dbReference type="CDD" id="cd19961">
    <property type="entry name" value="EcYidC-like_peri"/>
    <property type="match status" value="1"/>
</dbReference>
<dbReference type="FunFam" id="2.70.98.90:FF:000004">
    <property type="entry name" value="Membrane protein insertase YidC"/>
    <property type="match status" value="1"/>
</dbReference>
<dbReference type="Gene3D" id="2.70.98.90">
    <property type="match status" value="1"/>
</dbReference>
<dbReference type="HAMAP" id="MF_01810">
    <property type="entry name" value="YidC_type1"/>
    <property type="match status" value="1"/>
</dbReference>
<dbReference type="InterPro" id="IPR019998">
    <property type="entry name" value="Membr_insert_YidC"/>
</dbReference>
<dbReference type="InterPro" id="IPR028053">
    <property type="entry name" value="Membr_insert_YidC_N"/>
</dbReference>
<dbReference type="InterPro" id="IPR001708">
    <property type="entry name" value="YidC/ALB3/OXA1/COX18"/>
</dbReference>
<dbReference type="InterPro" id="IPR028055">
    <property type="entry name" value="YidC/Oxa/ALB_C"/>
</dbReference>
<dbReference type="InterPro" id="IPR047196">
    <property type="entry name" value="YidC_ALB_C"/>
</dbReference>
<dbReference type="InterPro" id="IPR038221">
    <property type="entry name" value="YidC_periplasmic_sf"/>
</dbReference>
<dbReference type="NCBIfam" id="NF002351">
    <property type="entry name" value="PRK01318.1-1"/>
    <property type="match status" value="1"/>
</dbReference>
<dbReference type="NCBIfam" id="NF002352">
    <property type="entry name" value="PRK01318.1-3"/>
    <property type="match status" value="1"/>
</dbReference>
<dbReference type="NCBIfam" id="TIGR03593">
    <property type="entry name" value="yidC_nterm"/>
    <property type="match status" value="1"/>
</dbReference>
<dbReference type="NCBIfam" id="TIGR03592">
    <property type="entry name" value="yidC_oxa1_cterm"/>
    <property type="match status" value="1"/>
</dbReference>
<dbReference type="PANTHER" id="PTHR12428:SF65">
    <property type="entry name" value="CYTOCHROME C OXIDASE ASSEMBLY PROTEIN COX18, MITOCHONDRIAL"/>
    <property type="match status" value="1"/>
</dbReference>
<dbReference type="PANTHER" id="PTHR12428">
    <property type="entry name" value="OXA1"/>
    <property type="match status" value="1"/>
</dbReference>
<dbReference type="Pfam" id="PF02096">
    <property type="entry name" value="60KD_IMP"/>
    <property type="match status" value="1"/>
</dbReference>
<dbReference type="Pfam" id="PF14849">
    <property type="entry name" value="YidC_periplas"/>
    <property type="match status" value="1"/>
</dbReference>
<dbReference type="PRINTS" id="PR00701">
    <property type="entry name" value="60KDINNERMP"/>
</dbReference>
<dbReference type="PRINTS" id="PR01900">
    <property type="entry name" value="YIDCPROTEIN"/>
</dbReference>
<name>YIDC_SHESR</name>
<organism>
    <name type="scientific">Shewanella sp. (strain MR-7)</name>
    <dbReference type="NCBI Taxonomy" id="60481"/>
    <lineage>
        <taxon>Bacteria</taxon>
        <taxon>Pseudomonadati</taxon>
        <taxon>Pseudomonadota</taxon>
        <taxon>Gammaproteobacteria</taxon>
        <taxon>Alteromonadales</taxon>
        <taxon>Shewanellaceae</taxon>
        <taxon>Shewanella</taxon>
    </lineage>
</organism>
<proteinExistence type="inferred from homology"/>
<reference key="1">
    <citation type="submission" date="2006-08" db="EMBL/GenBank/DDBJ databases">
        <title>Complete sequence of chromosome 1 of Shewanella sp. MR-7.</title>
        <authorList>
            <person name="Copeland A."/>
            <person name="Lucas S."/>
            <person name="Lapidus A."/>
            <person name="Barry K."/>
            <person name="Detter J.C."/>
            <person name="Glavina del Rio T."/>
            <person name="Hammon N."/>
            <person name="Israni S."/>
            <person name="Dalin E."/>
            <person name="Tice H."/>
            <person name="Pitluck S."/>
            <person name="Kiss H."/>
            <person name="Brettin T."/>
            <person name="Bruce D."/>
            <person name="Han C."/>
            <person name="Tapia R."/>
            <person name="Gilna P."/>
            <person name="Schmutz J."/>
            <person name="Larimer F."/>
            <person name="Land M."/>
            <person name="Hauser L."/>
            <person name="Kyrpides N."/>
            <person name="Mikhailova N."/>
            <person name="Nealson K."/>
            <person name="Konstantinidis K."/>
            <person name="Klappenbach J."/>
            <person name="Tiedje J."/>
            <person name="Richardson P."/>
        </authorList>
    </citation>
    <scope>NUCLEOTIDE SEQUENCE [LARGE SCALE GENOMIC DNA]</scope>
    <source>
        <strain>MR-7</strain>
    </source>
</reference>
<keyword id="KW-0997">Cell inner membrane</keyword>
<keyword id="KW-1003">Cell membrane</keyword>
<keyword id="KW-0143">Chaperone</keyword>
<keyword id="KW-0472">Membrane</keyword>
<keyword id="KW-0653">Protein transport</keyword>
<keyword id="KW-0812">Transmembrane</keyword>
<keyword id="KW-1133">Transmembrane helix</keyword>
<keyword id="KW-0813">Transport</keyword>
<evidence type="ECO:0000255" key="1">
    <source>
        <dbReference type="HAMAP-Rule" id="MF_01810"/>
    </source>
</evidence>
<comment type="function">
    <text evidence="1">Required for the insertion and/or proper folding and/or complex formation of integral membrane proteins into the membrane. Involved in integration of membrane proteins that insert both dependently and independently of the Sec translocase complex, as well as at least some lipoproteins. Aids folding of multispanning membrane proteins.</text>
</comment>
<comment type="subunit">
    <text evidence="1">Interacts with the Sec translocase complex via SecD. Specifically interacts with transmembrane segments of nascent integral membrane proteins during membrane integration.</text>
</comment>
<comment type="subcellular location">
    <subcellularLocation>
        <location evidence="1">Cell inner membrane</location>
        <topology evidence="1">Multi-pass membrane protein</topology>
    </subcellularLocation>
</comment>
<comment type="similarity">
    <text evidence="1">Belongs to the OXA1/ALB3/YidC family. Type 1 subfamily.</text>
</comment>
<feature type="chain" id="PRO_1000070174" description="Membrane protein insertase YidC">
    <location>
        <begin position="1"/>
        <end position="541"/>
    </location>
</feature>
<feature type="transmembrane region" description="Helical" evidence="1">
    <location>
        <begin position="6"/>
        <end position="26"/>
    </location>
</feature>
<feature type="transmembrane region" description="Helical" evidence="1">
    <location>
        <begin position="349"/>
        <end position="369"/>
    </location>
</feature>
<feature type="transmembrane region" description="Helical" evidence="1">
    <location>
        <begin position="420"/>
        <end position="440"/>
    </location>
</feature>
<feature type="transmembrane region" description="Helical" evidence="1">
    <location>
        <begin position="457"/>
        <end position="477"/>
    </location>
</feature>
<feature type="transmembrane region" description="Helical" evidence="1">
    <location>
        <begin position="500"/>
        <end position="520"/>
    </location>
</feature>